<accession>B5FJM3</accession>
<proteinExistence type="inferred from homology"/>
<comment type="function">
    <text evidence="1">Part of a sulfur-relay system required for 2-thiolation of 5-methylaminomethyl-2-thiouridine (mnm(5)s(2)U) at tRNA wobble positions.</text>
</comment>
<comment type="subunit">
    <text evidence="1">Heterohexamer, formed by a dimer of trimers. The hexameric TusBCD complex contains 2 copies each of TusB, TusC and TusD. The TusBCD complex interacts with TusE.</text>
</comment>
<comment type="subcellular location">
    <subcellularLocation>
        <location evidence="1">Cytoplasm</location>
    </subcellularLocation>
</comment>
<comment type="similarity">
    <text evidence="1">Belongs to the DsrH/TusB family.</text>
</comment>
<dbReference type="EMBL" id="CP001144">
    <property type="protein sequence ID" value="ACH77857.1"/>
    <property type="molecule type" value="Genomic_DNA"/>
</dbReference>
<dbReference type="RefSeq" id="WP_000903399.1">
    <property type="nucleotide sequence ID" value="NC_011205.1"/>
</dbReference>
<dbReference type="SMR" id="B5FJM3"/>
<dbReference type="KEGG" id="sed:SeD_A3817"/>
<dbReference type="HOGENOM" id="CLU_166087_2_1_6"/>
<dbReference type="Proteomes" id="UP000008322">
    <property type="component" value="Chromosome"/>
</dbReference>
<dbReference type="GO" id="GO:1990228">
    <property type="term" value="C:sulfurtransferase complex"/>
    <property type="evidence" value="ECO:0007669"/>
    <property type="project" value="TreeGrafter"/>
</dbReference>
<dbReference type="GO" id="GO:0002143">
    <property type="term" value="P:tRNA wobble position uridine thiolation"/>
    <property type="evidence" value="ECO:0007669"/>
    <property type="project" value="InterPro"/>
</dbReference>
<dbReference type="FunFam" id="3.40.1260.10:FF:000002">
    <property type="entry name" value="Sulfurtransferase TusB"/>
    <property type="match status" value="1"/>
</dbReference>
<dbReference type="Gene3D" id="3.40.1260.10">
    <property type="entry name" value="DsrEFH-like"/>
    <property type="match status" value="1"/>
</dbReference>
<dbReference type="HAMAP" id="MF_01564">
    <property type="entry name" value="Thiourid_synth_B"/>
    <property type="match status" value="1"/>
</dbReference>
<dbReference type="InterPro" id="IPR027396">
    <property type="entry name" value="DsrEFH-like"/>
</dbReference>
<dbReference type="InterPro" id="IPR023526">
    <property type="entry name" value="Sulphur_relay_TusB"/>
</dbReference>
<dbReference type="InterPro" id="IPR007215">
    <property type="entry name" value="Sulphur_relay_TusB/DsrH"/>
</dbReference>
<dbReference type="NCBIfam" id="NF010035">
    <property type="entry name" value="PRK13510.1"/>
    <property type="match status" value="1"/>
</dbReference>
<dbReference type="NCBIfam" id="TIGR03011">
    <property type="entry name" value="sulf_tusB_dsrH"/>
    <property type="match status" value="1"/>
</dbReference>
<dbReference type="PANTHER" id="PTHR37526">
    <property type="entry name" value="PROTEIN TUSB"/>
    <property type="match status" value="1"/>
</dbReference>
<dbReference type="PANTHER" id="PTHR37526:SF1">
    <property type="entry name" value="PROTEIN TUSB"/>
    <property type="match status" value="1"/>
</dbReference>
<dbReference type="Pfam" id="PF04077">
    <property type="entry name" value="DsrH"/>
    <property type="match status" value="1"/>
</dbReference>
<dbReference type="SUPFAM" id="SSF75169">
    <property type="entry name" value="DsrEFH-like"/>
    <property type="match status" value="1"/>
</dbReference>
<organism>
    <name type="scientific">Salmonella dublin (strain CT_02021853)</name>
    <dbReference type="NCBI Taxonomy" id="439851"/>
    <lineage>
        <taxon>Bacteria</taxon>
        <taxon>Pseudomonadati</taxon>
        <taxon>Pseudomonadota</taxon>
        <taxon>Gammaproteobacteria</taxon>
        <taxon>Enterobacterales</taxon>
        <taxon>Enterobacteriaceae</taxon>
        <taxon>Salmonella</taxon>
    </lineage>
</organism>
<evidence type="ECO:0000255" key="1">
    <source>
        <dbReference type="HAMAP-Rule" id="MF_01564"/>
    </source>
</evidence>
<keyword id="KW-0963">Cytoplasm</keyword>
<keyword id="KW-0819">tRNA processing</keyword>
<protein>
    <recommendedName>
        <fullName evidence="1">Protein TusB</fullName>
    </recommendedName>
    <alternativeName>
        <fullName evidence="1">tRNA 2-thiouridine synthesizing protein B</fullName>
    </alternativeName>
</protein>
<feature type="chain" id="PRO_1000189843" description="Protein TusB">
    <location>
        <begin position="1"/>
        <end position="95"/>
    </location>
</feature>
<reference key="1">
    <citation type="journal article" date="2011" name="J. Bacteriol.">
        <title>Comparative genomics of 28 Salmonella enterica isolates: evidence for CRISPR-mediated adaptive sublineage evolution.</title>
        <authorList>
            <person name="Fricke W.F."/>
            <person name="Mammel M.K."/>
            <person name="McDermott P.F."/>
            <person name="Tartera C."/>
            <person name="White D.G."/>
            <person name="Leclerc J.E."/>
            <person name="Ravel J."/>
            <person name="Cebula T.A."/>
        </authorList>
    </citation>
    <scope>NUCLEOTIDE SEQUENCE [LARGE SCALE GENOMIC DNA]</scope>
    <source>
        <strain>CT_02021853</strain>
    </source>
</reference>
<sequence length="95" mass="10518">MLHTLPHCASSVDFPALLRLLKEGDALLLLQDGVTVAIEGNRFLESLRDAPITVYALKEDIDARGLGGQISDSVVRVDYTDFVRLTVKYANQMAW</sequence>
<gene>
    <name evidence="1" type="primary">tusB</name>
    <name type="ordered locus">SeD_A3817</name>
</gene>
<name>TUSB_SALDC</name>